<organism>
    <name type="scientific">Pongo abelii</name>
    <name type="common">Sumatran orangutan</name>
    <name type="synonym">Pongo pygmaeus abelii</name>
    <dbReference type="NCBI Taxonomy" id="9601"/>
    <lineage>
        <taxon>Eukaryota</taxon>
        <taxon>Metazoa</taxon>
        <taxon>Chordata</taxon>
        <taxon>Craniata</taxon>
        <taxon>Vertebrata</taxon>
        <taxon>Euteleostomi</taxon>
        <taxon>Mammalia</taxon>
        <taxon>Eutheria</taxon>
        <taxon>Euarchontoglires</taxon>
        <taxon>Primates</taxon>
        <taxon>Haplorrhini</taxon>
        <taxon>Catarrhini</taxon>
        <taxon>Hominidae</taxon>
        <taxon>Pongo</taxon>
    </lineage>
</organism>
<reference key="1">
    <citation type="submission" date="2004-11" db="EMBL/GenBank/DDBJ databases">
        <authorList>
            <consortium name="The German cDNA consortium"/>
        </authorList>
    </citation>
    <scope>NUCLEOTIDE SEQUENCE [LARGE SCALE MRNA]</scope>
    <source>
        <tissue>Brain cortex</tissue>
    </source>
</reference>
<accession>Q5R4U1</accession>
<keyword id="KW-0106">Calcium</keyword>
<keyword id="KW-0175">Coiled coil</keyword>
<keyword id="KW-0963">Cytoplasm</keyword>
<keyword id="KW-0238">DNA-binding</keyword>
<keyword id="KW-0333">Golgi apparatus</keyword>
<keyword id="KW-0344">Guanine-nucleotide releasing factor</keyword>
<keyword id="KW-0472">Membrane</keyword>
<keyword id="KW-0479">Metal-binding</keyword>
<keyword id="KW-0597">Phosphoprotein</keyword>
<keyword id="KW-1185">Reference proteome</keyword>
<keyword id="KW-0677">Repeat</keyword>
<keyword id="KW-0964">Secreted</keyword>
<keyword id="KW-0732">Signal</keyword>
<comment type="function">
    <text evidence="3 4">Major calcium-binding protein of the Golgi which may have a role in calcium homeostasis (By similarity). Acts as a non-receptor guanine nucleotide exchange factor which binds to and activates alpha subunits of guanine nucleotide-binding proteins (G proteins) (By similarity).</text>
</comment>
<comment type="subunit">
    <text evidence="4">Interacts (via GBA motif) with guanine nucleotide-binding protein G(i) alpha subunits GNAI1, GNAI2 and GNAI3 with higher affinity for GNAI1 and GNAI3 than for GNAI2. Preferentially interacts with inactive rather than active GNAI3. Interaction with GNAI3 is inhibited when NUCB1 binds calcium, probably due to a conformational change which renders the GBA motif inaccessible.</text>
</comment>
<comment type="subcellular location">
    <subcellularLocation>
        <location evidence="4">Golgi apparatus</location>
        <location evidence="4">cis-Golgi network membrane</location>
        <topology evidence="4">Peripheral membrane protein</topology>
        <orientation evidence="4">Lumenal side</orientation>
    </subcellularLocation>
    <subcellularLocation>
        <location evidence="4">Cytoplasm</location>
    </subcellularLocation>
    <subcellularLocation>
        <location evidence="4">Secreted</location>
    </subcellularLocation>
    <text evidence="4">A small fraction of the protein may be cytoplasmic.</text>
</comment>
<comment type="domain">
    <text evidence="2">The EF-hand domains are unfolded in the absence of Ca(2+) and fold upon Ca(2+) addition.</text>
</comment>
<comment type="domain">
    <text evidence="4">The GBA (G-alpha binding and activating) motif mediates binding to the alpha subunits of guanine nucleotide-binding proteins (G proteins).</text>
</comment>
<comment type="similarity">
    <text evidence="8">Belongs to the nucleobindin family.</text>
</comment>
<feature type="signal peptide" evidence="3">
    <location>
        <begin position="1"/>
        <end position="26"/>
    </location>
</feature>
<feature type="chain" id="PRO_0000284128" description="Nucleobindin-1">
    <location>
        <begin position="27"/>
        <end position="463"/>
    </location>
</feature>
<feature type="domain" description="EF-hand 1" evidence="6">
    <location>
        <begin position="240"/>
        <end position="275"/>
    </location>
</feature>
<feature type="domain" description="EF-hand 2" evidence="6">
    <location>
        <begin position="292"/>
        <end position="327"/>
    </location>
</feature>
<feature type="DNA-binding region" evidence="5">
    <location>
        <begin position="172"/>
        <end position="218"/>
    </location>
</feature>
<feature type="region of interest" description="Disordered" evidence="7">
    <location>
        <begin position="193"/>
        <end position="221"/>
    </location>
</feature>
<feature type="region of interest" description="Binds to GNAI2 and GNAI3" evidence="1">
    <location>
        <begin position="228"/>
        <end position="321"/>
    </location>
</feature>
<feature type="region of interest" description="Disordered" evidence="7">
    <location>
        <begin position="368"/>
        <end position="463"/>
    </location>
</feature>
<feature type="coiled-coil region" evidence="5">
    <location>
        <begin position="150"/>
        <end position="218"/>
    </location>
</feature>
<feature type="coiled-coil region" evidence="5">
    <location>
        <begin position="341"/>
        <end position="409"/>
    </location>
</feature>
<feature type="short sequence motif" description="GBA" evidence="2">
    <location>
        <begin position="303"/>
        <end position="333"/>
    </location>
</feature>
<feature type="compositionally biased region" description="Basic and acidic residues" evidence="7">
    <location>
        <begin position="193"/>
        <end position="210"/>
    </location>
</feature>
<feature type="compositionally biased region" description="Basic and acidic residues" evidence="7">
    <location>
        <begin position="439"/>
        <end position="463"/>
    </location>
</feature>
<feature type="binding site" evidence="6">
    <location>
        <position position="253"/>
    </location>
    <ligand>
        <name>Ca(2+)</name>
        <dbReference type="ChEBI" id="CHEBI:29108"/>
        <label>1</label>
    </ligand>
</feature>
<feature type="binding site" evidence="6">
    <location>
        <position position="255"/>
    </location>
    <ligand>
        <name>Ca(2+)</name>
        <dbReference type="ChEBI" id="CHEBI:29108"/>
        <label>1</label>
    </ligand>
</feature>
<feature type="binding site" evidence="6">
    <location>
        <position position="257"/>
    </location>
    <ligand>
        <name>Ca(2+)</name>
        <dbReference type="ChEBI" id="CHEBI:29108"/>
        <label>1</label>
    </ligand>
</feature>
<feature type="binding site" evidence="6">
    <location>
        <position position="264"/>
    </location>
    <ligand>
        <name>Ca(2+)</name>
        <dbReference type="ChEBI" id="CHEBI:29108"/>
        <label>1</label>
    </ligand>
</feature>
<feature type="binding site" evidence="6">
    <location>
        <position position="305"/>
    </location>
    <ligand>
        <name>Ca(2+)</name>
        <dbReference type="ChEBI" id="CHEBI:29108"/>
        <label>2</label>
    </ligand>
</feature>
<feature type="binding site" evidence="6">
    <location>
        <position position="307"/>
    </location>
    <ligand>
        <name>Ca(2+)</name>
        <dbReference type="ChEBI" id="CHEBI:29108"/>
        <label>2</label>
    </ligand>
</feature>
<feature type="binding site" evidence="6">
    <location>
        <position position="309"/>
    </location>
    <ligand>
        <name>Ca(2+)</name>
        <dbReference type="ChEBI" id="CHEBI:29108"/>
        <label>2</label>
    </ligand>
</feature>
<feature type="binding site" evidence="6">
    <location>
        <position position="316"/>
    </location>
    <ligand>
        <name>Ca(2+)</name>
        <dbReference type="ChEBI" id="CHEBI:29108"/>
        <label>2</label>
    </ligand>
</feature>
<feature type="modified residue" description="Phosphoserine" evidence="2">
    <location>
        <position position="86"/>
    </location>
</feature>
<feature type="modified residue" description="Phosphothreonine" evidence="2">
    <location>
        <position position="148"/>
    </location>
</feature>
<feature type="modified residue" description="Phosphoserine" evidence="2">
    <location>
        <position position="369"/>
    </location>
</feature>
<proteinExistence type="evidence at transcript level"/>
<protein>
    <recommendedName>
        <fullName>Nucleobindin-1</fullName>
    </recommendedName>
</protein>
<sequence>MPPSGPQGTLLLLPLLLLLLLRAVLAVPLERGAPNKEETPATESPDTGLYYHRYLQEVIDVLETDGHFREKLQAANAEDIKSGKLSRELDFVSHHVRTKLDELKRQEVSRLRMLLKAKMDAEQDPNVQVDHLNLLKQFEHLDPQNQHTFEARDLELLIQTATRDLAQYDAAHHEEFKRYEMLKEHERRRYLESLGEEQRKEAERRLEEQQRRHREHPKVNVPGSQAQLKEVWEELDGLDPNRFNPKTFFILHDINSDGVLDEQELEALFTKELEKVYDPKNEEDDMREMEEERLRMREHVMKNVDTNQDRLVTLGEFLASTQRKEFGDTGEGWETVEMHPAYTEEELRRFEEELAAREAELNAKAQRLSQETEALGRSQGRLEAQKRELQQAVLHMEQRKQQQQQQQQQGHKAPAAHPEGQLKFHPDTDDVPVPAPAGDQKEVDTSEKKLLERLPEVEVPQHL</sequence>
<name>NUCB1_PONAB</name>
<evidence type="ECO:0000250" key="1"/>
<evidence type="ECO:0000250" key="2">
    <source>
        <dbReference type="UniProtKB" id="Q02818"/>
    </source>
</evidence>
<evidence type="ECO:0000250" key="3">
    <source>
        <dbReference type="UniProtKB" id="Q0P569"/>
    </source>
</evidence>
<evidence type="ECO:0000250" key="4">
    <source>
        <dbReference type="UniProtKB" id="Q63083"/>
    </source>
</evidence>
<evidence type="ECO:0000255" key="5"/>
<evidence type="ECO:0000255" key="6">
    <source>
        <dbReference type="PROSITE-ProRule" id="PRU00448"/>
    </source>
</evidence>
<evidence type="ECO:0000256" key="7">
    <source>
        <dbReference type="SAM" id="MobiDB-lite"/>
    </source>
</evidence>
<evidence type="ECO:0000305" key="8"/>
<dbReference type="EMBL" id="CR861150">
    <property type="protein sequence ID" value="CAH93225.1"/>
    <property type="molecule type" value="mRNA"/>
</dbReference>
<dbReference type="RefSeq" id="NP_001126897.1">
    <property type="nucleotide sequence ID" value="NM_001133425.1"/>
</dbReference>
<dbReference type="BMRB" id="Q5R4U1"/>
<dbReference type="SMR" id="Q5R4U1"/>
<dbReference type="FunCoup" id="Q5R4U1">
    <property type="interactions" value="1959"/>
</dbReference>
<dbReference type="STRING" id="9601.ENSPPYP00000011431"/>
<dbReference type="GeneID" id="100173912"/>
<dbReference type="KEGG" id="pon:100173912"/>
<dbReference type="CTD" id="4924"/>
<dbReference type="eggNOG" id="KOG3866">
    <property type="taxonomic scope" value="Eukaryota"/>
</dbReference>
<dbReference type="InParanoid" id="Q5R4U1"/>
<dbReference type="OrthoDB" id="5982823at2759"/>
<dbReference type="Proteomes" id="UP000001595">
    <property type="component" value="Unplaced"/>
</dbReference>
<dbReference type="GO" id="GO:0005793">
    <property type="term" value="C:endoplasmic reticulum-Golgi intermediate compartment"/>
    <property type="evidence" value="ECO:0007669"/>
    <property type="project" value="TreeGrafter"/>
</dbReference>
<dbReference type="GO" id="GO:0070062">
    <property type="term" value="C:extracellular exosome"/>
    <property type="evidence" value="ECO:0007669"/>
    <property type="project" value="TreeGrafter"/>
</dbReference>
<dbReference type="GO" id="GO:0005794">
    <property type="term" value="C:Golgi apparatus"/>
    <property type="evidence" value="ECO:0007669"/>
    <property type="project" value="UniProtKB-SubCell"/>
</dbReference>
<dbReference type="GO" id="GO:0016020">
    <property type="term" value="C:membrane"/>
    <property type="evidence" value="ECO:0007669"/>
    <property type="project" value="UniProtKB-KW"/>
</dbReference>
<dbReference type="GO" id="GO:0005509">
    <property type="term" value="F:calcium ion binding"/>
    <property type="evidence" value="ECO:0007669"/>
    <property type="project" value="InterPro"/>
</dbReference>
<dbReference type="GO" id="GO:0003677">
    <property type="term" value="F:DNA binding"/>
    <property type="evidence" value="ECO:0007669"/>
    <property type="project" value="UniProtKB-KW"/>
</dbReference>
<dbReference type="GO" id="GO:0001965">
    <property type="term" value="F:G-protein alpha-subunit binding"/>
    <property type="evidence" value="ECO:0000250"/>
    <property type="project" value="UniProtKB"/>
</dbReference>
<dbReference type="GO" id="GO:0005085">
    <property type="term" value="F:guanyl-nucleotide exchange factor activity"/>
    <property type="evidence" value="ECO:0000250"/>
    <property type="project" value="UniProtKB"/>
</dbReference>
<dbReference type="GO" id="GO:0007264">
    <property type="term" value="P:small GTPase-mediated signal transduction"/>
    <property type="evidence" value="ECO:0000250"/>
    <property type="project" value="UniProtKB"/>
</dbReference>
<dbReference type="FunFam" id="1.10.238.10:FF:000045">
    <property type="entry name" value="Nucleobindin 2"/>
    <property type="match status" value="1"/>
</dbReference>
<dbReference type="Gene3D" id="1.10.238.10">
    <property type="entry name" value="EF-hand"/>
    <property type="match status" value="1"/>
</dbReference>
<dbReference type="InterPro" id="IPR011992">
    <property type="entry name" value="EF-hand-dom_pair"/>
</dbReference>
<dbReference type="InterPro" id="IPR018247">
    <property type="entry name" value="EF_Hand_1_Ca_BS"/>
</dbReference>
<dbReference type="InterPro" id="IPR002048">
    <property type="entry name" value="EF_hand_dom"/>
</dbReference>
<dbReference type="InterPro" id="IPR040250">
    <property type="entry name" value="Nucleobindin"/>
</dbReference>
<dbReference type="PANTHER" id="PTHR19237">
    <property type="entry name" value="NUCLEOBINDIN"/>
    <property type="match status" value="1"/>
</dbReference>
<dbReference type="PANTHER" id="PTHR19237:SF21">
    <property type="entry name" value="NUCLEOBINDIN-1"/>
    <property type="match status" value="1"/>
</dbReference>
<dbReference type="Pfam" id="PF25434">
    <property type="entry name" value="NUCB1_N"/>
    <property type="match status" value="1"/>
</dbReference>
<dbReference type="SUPFAM" id="SSF47473">
    <property type="entry name" value="EF-hand"/>
    <property type="match status" value="1"/>
</dbReference>
<dbReference type="PROSITE" id="PS00018">
    <property type="entry name" value="EF_HAND_1"/>
    <property type="match status" value="2"/>
</dbReference>
<dbReference type="PROSITE" id="PS50222">
    <property type="entry name" value="EF_HAND_2"/>
    <property type="match status" value="2"/>
</dbReference>
<gene>
    <name type="primary">NUCB1</name>
</gene>